<name>KTHY_STRZP</name>
<dbReference type="EC" id="2.7.4.9" evidence="1"/>
<dbReference type="EMBL" id="CP000920">
    <property type="protein sequence ID" value="ACO21241.1"/>
    <property type="molecule type" value="Genomic_DNA"/>
</dbReference>
<dbReference type="RefSeq" id="WP_000033388.1">
    <property type="nucleotide sequence ID" value="NC_012467.1"/>
</dbReference>
<dbReference type="SMR" id="C1CK20"/>
<dbReference type="GeneID" id="45653720"/>
<dbReference type="KEGG" id="spp:SPP_0941"/>
<dbReference type="HOGENOM" id="CLU_049131_0_2_9"/>
<dbReference type="GO" id="GO:0005829">
    <property type="term" value="C:cytosol"/>
    <property type="evidence" value="ECO:0007669"/>
    <property type="project" value="TreeGrafter"/>
</dbReference>
<dbReference type="GO" id="GO:0005524">
    <property type="term" value="F:ATP binding"/>
    <property type="evidence" value="ECO:0007669"/>
    <property type="project" value="UniProtKB-UniRule"/>
</dbReference>
<dbReference type="GO" id="GO:0004798">
    <property type="term" value="F:dTMP kinase activity"/>
    <property type="evidence" value="ECO:0007669"/>
    <property type="project" value="UniProtKB-UniRule"/>
</dbReference>
<dbReference type="GO" id="GO:0006233">
    <property type="term" value="P:dTDP biosynthetic process"/>
    <property type="evidence" value="ECO:0007669"/>
    <property type="project" value="InterPro"/>
</dbReference>
<dbReference type="GO" id="GO:0006235">
    <property type="term" value="P:dTTP biosynthetic process"/>
    <property type="evidence" value="ECO:0007669"/>
    <property type="project" value="UniProtKB-UniRule"/>
</dbReference>
<dbReference type="GO" id="GO:0006227">
    <property type="term" value="P:dUDP biosynthetic process"/>
    <property type="evidence" value="ECO:0007669"/>
    <property type="project" value="TreeGrafter"/>
</dbReference>
<dbReference type="CDD" id="cd01672">
    <property type="entry name" value="TMPK"/>
    <property type="match status" value="1"/>
</dbReference>
<dbReference type="FunFam" id="3.40.50.300:FF:000225">
    <property type="entry name" value="Thymidylate kinase"/>
    <property type="match status" value="1"/>
</dbReference>
<dbReference type="Gene3D" id="3.40.50.300">
    <property type="entry name" value="P-loop containing nucleotide triphosphate hydrolases"/>
    <property type="match status" value="1"/>
</dbReference>
<dbReference type="HAMAP" id="MF_00165">
    <property type="entry name" value="Thymidylate_kinase"/>
    <property type="match status" value="1"/>
</dbReference>
<dbReference type="InterPro" id="IPR027417">
    <property type="entry name" value="P-loop_NTPase"/>
</dbReference>
<dbReference type="InterPro" id="IPR039430">
    <property type="entry name" value="Thymidylate_kin-like_dom"/>
</dbReference>
<dbReference type="InterPro" id="IPR018095">
    <property type="entry name" value="Thymidylate_kin_CS"/>
</dbReference>
<dbReference type="InterPro" id="IPR018094">
    <property type="entry name" value="Thymidylate_kinase"/>
</dbReference>
<dbReference type="NCBIfam" id="TIGR00041">
    <property type="entry name" value="DTMP_kinase"/>
    <property type="match status" value="1"/>
</dbReference>
<dbReference type="PANTHER" id="PTHR10344">
    <property type="entry name" value="THYMIDYLATE KINASE"/>
    <property type="match status" value="1"/>
</dbReference>
<dbReference type="PANTHER" id="PTHR10344:SF4">
    <property type="entry name" value="UMP-CMP KINASE 2, MITOCHONDRIAL"/>
    <property type="match status" value="1"/>
</dbReference>
<dbReference type="Pfam" id="PF02223">
    <property type="entry name" value="Thymidylate_kin"/>
    <property type="match status" value="1"/>
</dbReference>
<dbReference type="SUPFAM" id="SSF52540">
    <property type="entry name" value="P-loop containing nucleoside triphosphate hydrolases"/>
    <property type="match status" value="1"/>
</dbReference>
<dbReference type="PROSITE" id="PS01331">
    <property type="entry name" value="THYMIDYLATE_KINASE"/>
    <property type="match status" value="1"/>
</dbReference>
<keyword id="KW-0067">ATP-binding</keyword>
<keyword id="KW-0418">Kinase</keyword>
<keyword id="KW-0545">Nucleotide biosynthesis</keyword>
<keyword id="KW-0547">Nucleotide-binding</keyword>
<keyword id="KW-0808">Transferase</keyword>
<gene>
    <name evidence="1" type="primary">tmk</name>
    <name type="ordered locus">SPP_0941</name>
</gene>
<comment type="function">
    <text evidence="1">Phosphorylation of dTMP to form dTDP in both de novo and salvage pathways of dTTP synthesis.</text>
</comment>
<comment type="catalytic activity">
    <reaction evidence="1">
        <text>dTMP + ATP = dTDP + ADP</text>
        <dbReference type="Rhea" id="RHEA:13517"/>
        <dbReference type="ChEBI" id="CHEBI:30616"/>
        <dbReference type="ChEBI" id="CHEBI:58369"/>
        <dbReference type="ChEBI" id="CHEBI:63528"/>
        <dbReference type="ChEBI" id="CHEBI:456216"/>
        <dbReference type="EC" id="2.7.4.9"/>
    </reaction>
</comment>
<comment type="similarity">
    <text evidence="1">Belongs to the thymidylate kinase family.</text>
</comment>
<evidence type="ECO:0000255" key="1">
    <source>
        <dbReference type="HAMAP-Rule" id="MF_00165"/>
    </source>
</evidence>
<feature type="chain" id="PRO_1000123594" description="Thymidylate kinase">
    <location>
        <begin position="1"/>
        <end position="212"/>
    </location>
</feature>
<feature type="binding site" evidence="1">
    <location>
        <begin position="11"/>
        <end position="18"/>
    </location>
    <ligand>
        <name>ATP</name>
        <dbReference type="ChEBI" id="CHEBI:30616"/>
    </ligand>
</feature>
<protein>
    <recommendedName>
        <fullName evidence="1">Thymidylate kinase</fullName>
        <ecNumber evidence="1">2.7.4.9</ecNumber>
    </recommendedName>
    <alternativeName>
        <fullName evidence="1">dTMP kinase</fullName>
    </alternativeName>
</protein>
<sequence>MSKGFLVSLEGPEGAGKTSVLEALLPILEEKGVKVLTTREPGGVLIGEKIREVILDPSHTQMDAKTELLLYIASRRQHLVEKVLPALEAGKLVIMDRFIDSSVAYQGFGRGLDIEAIDWLNQFATDGLKPDLTLYFDIEVEEGLARIAANSDREVNRLDLEGLDLHKKVRQGYLSLLDKEGNRIVKIDASLPLEQVVETTKAVLFDGMGLAK</sequence>
<accession>C1CK20</accession>
<proteinExistence type="inferred from homology"/>
<organism>
    <name type="scientific">Streptococcus pneumoniae (strain P1031)</name>
    <dbReference type="NCBI Taxonomy" id="488223"/>
    <lineage>
        <taxon>Bacteria</taxon>
        <taxon>Bacillati</taxon>
        <taxon>Bacillota</taxon>
        <taxon>Bacilli</taxon>
        <taxon>Lactobacillales</taxon>
        <taxon>Streptococcaceae</taxon>
        <taxon>Streptococcus</taxon>
    </lineage>
</organism>
<reference key="1">
    <citation type="journal article" date="2010" name="Genome Biol.">
        <title>Structure and dynamics of the pan-genome of Streptococcus pneumoniae and closely related species.</title>
        <authorList>
            <person name="Donati C."/>
            <person name="Hiller N.L."/>
            <person name="Tettelin H."/>
            <person name="Muzzi A."/>
            <person name="Croucher N.J."/>
            <person name="Angiuoli S.V."/>
            <person name="Oggioni M."/>
            <person name="Dunning Hotopp J.C."/>
            <person name="Hu F.Z."/>
            <person name="Riley D.R."/>
            <person name="Covacci A."/>
            <person name="Mitchell T.J."/>
            <person name="Bentley S.D."/>
            <person name="Kilian M."/>
            <person name="Ehrlich G.D."/>
            <person name="Rappuoli R."/>
            <person name="Moxon E.R."/>
            <person name="Masignani V."/>
        </authorList>
    </citation>
    <scope>NUCLEOTIDE SEQUENCE [LARGE SCALE GENOMIC DNA]</scope>
    <source>
        <strain>P1031</strain>
    </source>
</reference>